<keyword id="KW-0456">Lyase</keyword>
<keyword id="KW-0460">Magnesium</keyword>
<keyword id="KW-0479">Metal-binding</keyword>
<accession>A8A4T9</accession>
<sequence>MNNDVFPNKFKAALAAKQVQIGCWSALSNPISTEVLGLAGFDWLVLDGEHAPNDISTFIPQLMALKGSASAPVVRVPTNEPVIIKRLLDIGFYNFLIPFVETKEEAELAVASTRYPPEGIRGVSVSHRANMFGTVADYFAQSNKNITILVQIESQQGVDNVDAIAATEGVDGIFVGPSDLAAALGHLGNASHPDVQKAIQHIFNRASAHGKPSGILAPVEADARRYLEWGATFVAVGSDLGVFRSATQKLADTFKK</sequence>
<evidence type="ECO:0000255" key="1">
    <source>
        <dbReference type="HAMAP-Rule" id="MF_01291"/>
    </source>
</evidence>
<proteinExistence type="inferred from homology"/>
<feature type="chain" id="PRO_0000353151" description="5-keto-4-deoxy-D-glucarate aldolase">
    <location>
        <begin position="1"/>
        <end position="256"/>
    </location>
</feature>
<feature type="active site" description="Proton acceptor" evidence="1">
    <location>
        <position position="50"/>
    </location>
</feature>
<feature type="binding site" evidence="1">
    <location>
        <position position="151"/>
    </location>
    <ligand>
        <name>substrate</name>
    </ligand>
</feature>
<feature type="binding site" evidence="1">
    <location>
        <position position="153"/>
    </location>
    <ligand>
        <name>Mg(2+)</name>
        <dbReference type="ChEBI" id="CHEBI:18420"/>
    </ligand>
</feature>
<feature type="binding site" evidence="1">
    <location>
        <position position="178"/>
    </location>
    <ligand>
        <name>substrate</name>
    </ligand>
</feature>
<feature type="binding site" evidence="1">
    <location>
        <position position="179"/>
    </location>
    <ligand>
        <name>Mg(2+)</name>
        <dbReference type="ChEBI" id="CHEBI:18420"/>
    </ligand>
</feature>
<feature type="binding site" evidence="1">
    <location>
        <position position="179"/>
    </location>
    <ligand>
        <name>substrate</name>
    </ligand>
</feature>
<feature type="site" description="Transition state stabilizer" evidence="1">
    <location>
        <position position="75"/>
    </location>
</feature>
<feature type="site" description="Increases basicity of active site His" evidence="1">
    <location>
        <position position="89"/>
    </location>
</feature>
<organism>
    <name type="scientific">Escherichia coli O9:H4 (strain HS)</name>
    <dbReference type="NCBI Taxonomy" id="331112"/>
    <lineage>
        <taxon>Bacteria</taxon>
        <taxon>Pseudomonadati</taxon>
        <taxon>Pseudomonadota</taxon>
        <taxon>Gammaproteobacteria</taxon>
        <taxon>Enterobacterales</taxon>
        <taxon>Enterobacteriaceae</taxon>
        <taxon>Escherichia</taxon>
    </lineage>
</organism>
<dbReference type="EC" id="4.1.2.20" evidence="1"/>
<dbReference type="EMBL" id="CP000802">
    <property type="protein sequence ID" value="ABV07543.1"/>
    <property type="molecule type" value="Genomic_DNA"/>
</dbReference>
<dbReference type="RefSeq" id="WP_001058209.1">
    <property type="nucleotide sequence ID" value="NC_009800.1"/>
</dbReference>
<dbReference type="SMR" id="A8A4T9"/>
<dbReference type="KEGG" id="ecx:EcHS_A3315"/>
<dbReference type="HOGENOM" id="CLU_059964_1_0_6"/>
<dbReference type="UniPathway" id="UPA00565">
    <property type="reaction ID" value="UER00630"/>
</dbReference>
<dbReference type="GO" id="GO:0005737">
    <property type="term" value="C:cytoplasm"/>
    <property type="evidence" value="ECO:0007669"/>
    <property type="project" value="TreeGrafter"/>
</dbReference>
<dbReference type="GO" id="GO:0008672">
    <property type="term" value="F:2-dehydro-3-deoxyglucarate aldolase activity"/>
    <property type="evidence" value="ECO:0007669"/>
    <property type="project" value="UniProtKB-UniRule"/>
</dbReference>
<dbReference type="GO" id="GO:0000287">
    <property type="term" value="F:magnesium ion binding"/>
    <property type="evidence" value="ECO:0007669"/>
    <property type="project" value="UniProtKB-UniRule"/>
</dbReference>
<dbReference type="GO" id="GO:0042838">
    <property type="term" value="P:D-glucarate catabolic process"/>
    <property type="evidence" value="ECO:0007669"/>
    <property type="project" value="UniProtKB-UniRule"/>
</dbReference>
<dbReference type="GO" id="GO:0046392">
    <property type="term" value="P:galactarate catabolic process"/>
    <property type="evidence" value="ECO:0007669"/>
    <property type="project" value="UniProtKB-UniRule"/>
</dbReference>
<dbReference type="FunFam" id="3.20.20.60:FF:000004">
    <property type="entry name" value="5-keto-4-deoxy-D-glucarate aldolase"/>
    <property type="match status" value="1"/>
</dbReference>
<dbReference type="Gene3D" id="3.20.20.60">
    <property type="entry name" value="Phosphoenolpyruvate-binding domains"/>
    <property type="match status" value="1"/>
</dbReference>
<dbReference type="HAMAP" id="MF_01291">
    <property type="entry name" value="KDGluc_aldolase"/>
    <property type="match status" value="1"/>
</dbReference>
<dbReference type="InterPro" id="IPR005000">
    <property type="entry name" value="Aldolase/citrate-lyase_domain"/>
</dbReference>
<dbReference type="InterPro" id="IPR017648">
    <property type="entry name" value="GarL"/>
</dbReference>
<dbReference type="InterPro" id="IPR050251">
    <property type="entry name" value="HpcH-HpaI_aldolase"/>
</dbReference>
<dbReference type="InterPro" id="IPR015813">
    <property type="entry name" value="Pyrv/PenolPyrv_kinase-like_dom"/>
</dbReference>
<dbReference type="InterPro" id="IPR040442">
    <property type="entry name" value="Pyrv_kinase-like_dom_sf"/>
</dbReference>
<dbReference type="NCBIfam" id="TIGR03239">
    <property type="entry name" value="GarL"/>
    <property type="match status" value="1"/>
</dbReference>
<dbReference type="NCBIfam" id="NF007849">
    <property type="entry name" value="PRK10558.1"/>
    <property type="match status" value="1"/>
</dbReference>
<dbReference type="PANTHER" id="PTHR30502">
    <property type="entry name" value="2-KETO-3-DEOXY-L-RHAMNONATE ALDOLASE"/>
    <property type="match status" value="1"/>
</dbReference>
<dbReference type="PANTHER" id="PTHR30502:SF4">
    <property type="entry name" value="5-KETO-4-DEOXY-D-GLUCARATE ALDOLASE"/>
    <property type="match status" value="1"/>
</dbReference>
<dbReference type="Pfam" id="PF03328">
    <property type="entry name" value="HpcH_HpaI"/>
    <property type="match status" value="1"/>
</dbReference>
<dbReference type="SUPFAM" id="SSF51621">
    <property type="entry name" value="Phosphoenolpyruvate/pyruvate domain"/>
    <property type="match status" value="1"/>
</dbReference>
<gene>
    <name evidence="1" type="primary">garL</name>
    <name type="ordered locus">EcHS_A3315</name>
</gene>
<protein>
    <recommendedName>
        <fullName evidence="1">5-keto-4-deoxy-D-glucarate aldolase</fullName>
        <shortName evidence="1">KDGluc aldolase</shortName>
        <shortName evidence="1">KDGlucA</shortName>
        <ecNumber evidence="1">4.1.2.20</ecNumber>
    </recommendedName>
    <alternativeName>
        <fullName evidence="1">2-dehydro-3-deoxy-D-glucarate aldolase</fullName>
    </alternativeName>
    <alternativeName>
        <fullName evidence="1">2-keto-3-deoxy-D-glucarate aldolase</fullName>
    </alternativeName>
    <alternativeName>
        <fullName evidence="1">5-dehydro-4-deoxy-D-glucarate aldolase</fullName>
    </alternativeName>
    <alternativeName>
        <fullName evidence="1">Alpha-keto-beta-deoxy-D-glucarate aldolase</fullName>
    </alternativeName>
</protein>
<reference key="1">
    <citation type="journal article" date="2008" name="J. Bacteriol.">
        <title>The pangenome structure of Escherichia coli: comparative genomic analysis of E. coli commensal and pathogenic isolates.</title>
        <authorList>
            <person name="Rasko D.A."/>
            <person name="Rosovitz M.J."/>
            <person name="Myers G.S.A."/>
            <person name="Mongodin E.F."/>
            <person name="Fricke W.F."/>
            <person name="Gajer P."/>
            <person name="Crabtree J."/>
            <person name="Sebaihia M."/>
            <person name="Thomson N.R."/>
            <person name="Chaudhuri R."/>
            <person name="Henderson I.R."/>
            <person name="Sperandio V."/>
            <person name="Ravel J."/>
        </authorList>
    </citation>
    <scope>NUCLEOTIDE SEQUENCE [LARGE SCALE GENOMIC DNA]</scope>
    <source>
        <strain>HS</strain>
    </source>
</reference>
<name>GARL_ECOHS</name>
<comment type="function">
    <text evidence="1">Catalyzes the reversible retro-aldol cleavage of both 5-keto-4-deoxy-D-glucarate and 2-keto-3-deoxy-D-glucarate to pyruvate and tartronic semialdehyde.</text>
</comment>
<comment type="catalytic activity">
    <reaction evidence="1">
        <text>5-dehydro-4-deoxy-D-glucarate = 2-hydroxy-3-oxopropanoate + pyruvate</text>
        <dbReference type="Rhea" id="RHEA:27726"/>
        <dbReference type="ChEBI" id="CHEBI:15361"/>
        <dbReference type="ChEBI" id="CHEBI:42819"/>
        <dbReference type="ChEBI" id="CHEBI:57978"/>
    </reaction>
</comment>
<comment type="catalytic activity">
    <reaction evidence="1">
        <text>2-dehydro-3-deoxy-D-glucarate = 2-hydroxy-3-oxopropanoate + pyruvate</text>
        <dbReference type="Rhea" id="RHEA:10268"/>
        <dbReference type="ChEBI" id="CHEBI:15361"/>
        <dbReference type="ChEBI" id="CHEBI:57978"/>
        <dbReference type="ChEBI" id="CHEBI:58098"/>
        <dbReference type="EC" id="4.1.2.20"/>
    </reaction>
</comment>
<comment type="cofactor">
    <cofactor evidence="1">
        <name>Mg(2+)</name>
        <dbReference type="ChEBI" id="CHEBI:18420"/>
    </cofactor>
    <text evidence="1">Binds 1 Mg(2+) ion per subunit.</text>
</comment>
<comment type="pathway">
    <text evidence="1">Carbohydrate acid metabolism; galactarate degradation; D-glycerate from galactarate: step 2/3.</text>
</comment>
<comment type="subunit">
    <text evidence="1">Homohexamer; trimer of dimers.</text>
</comment>
<comment type="similarity">
    <text evidence="1">Belongs to the HpcH/HpaI aldolase family. KDGluc aldolase subfamily.</text>
</comment>